<accession>Q1R802</accession>
<proteinExistence type="inferred from homology"/>
<sequence length="166" mass="19410">MTESTSRRPAYARLLDRAVRILAVRDHSEQELRRKLAAPIMGKNGPEEIDATAEDYERVIAWCHEHGYLDDSRFVARFIASRSRKGYGPARIRQELNQKGISREATEKAMRECDIDWCALARDQATRKYGEPLPTVFSEKVKIQRFLLYRGYLMEDIQDIWRNFAD</sequence>
<dbReference type="EMBL" id="CP000243">
    <property type="protein sequence ID" value="ABE08512.1"/>
    <property type="molecule type" value="Genomic_DNA"/>
</dbReference>
<dbReference type="RefSeq" id="WP_000140506.1">
    <property type="nucleotide sequence ID" value="NZ_CP064825.1"/>
</dbReference>
<dbReference type="SMR" id="Q1R802"/>
<dbReference type="GeneID" id="75172780"/>
<dbReference type="KEGG" id="eci:UTI89_C3060"/>
<dbReference type="HOGENOM" id="CLU_066607_3_2_6"/>
<dbReference type="Proteomes" id="UP000001952">
    <property type="component" value="Chromosome"/>
</dbReference>
<dbReference type="GO" id="GO:0005737">
    <property type="term" value="C:cytoplasm"/>
    <property type="evidence" value="ECO:0007669"/>
    <property type="project" value="UniProtKB-SubCell"/>
</dbReference>
<dbReference type="GO" id="GO:0006282">
    <property type="term" value="P:regulation of DNA repair"/>
    <property type="evidence" value="ECO:0007669"/>
    <property type="project" value="UniProtKB-UniRule"/>
</dbReference>
<dbReference type="FunFam" id="1.10.10.10:FF:000133">
    <property type="entry name" value="Regulatory protein RecX"/>
    <property type="match status" value="1"/>
</dbReference>
<dbReference type="FunFam" id="1.10.10.10:FF:000134">
    <property type="entry name" value="Regulatory protein RecX"/>
    <property type="match status" value="1"/>
</dbReference>
<dbReference type="FunFam" id="1.10.10.10:FF:000209">
    <property type="entry name" value="Regulatory protein RecX"/>
    <property type="match status" value="1"/>
</dbReference>
<dbReference type="Gene3D" id="1.10.10.10">
    <property type="entry name" value="Winged helix-like DNA-binding domain superfamily/Winged helix DNA-binding domain"/>
    <property type="match status" value="3"/>
</dbReference>
<dbReference type="HAMAP" id="MF_01114">
    <property type="entry name" value="RecX"/>
    <property type="match status" value="1"/>
</dbReference>
<dbReference type="InterPro" id="IPR053926">
    <property type="entry name" value="RecX_HTH_1st"/>
</dbReference>
<dbReference type="InterPro" id="IPR053924">
    <property type="entry name" value="RecX_HTH_2nd"/>
</dbReference>
<dbReference type="InterPro" id="IPR053925">
    <property type="entry name" value="RecX_HTH_3rd"/>
</dbReference>
<dbReference type="InterPro" id="IPR003783">
    <property type="entry name" value="Regulatory_RecX"/>
</dbReference>
<dbReference type="InterPro" id="IPR036388">
    <property type="entry name" value="WH-like_DNA-bd_sf"/>
</dbReference>
<dbReference type="NCBIfam" id="NF001052">
    <property type="entry name" value="PRK00117.1-1"/>
    <property type="match status" value="1"/>
</dbReference>
<dbReference type="PANTHER" id="PTHR33602">
    <property type="entry name" value="REGULATORY PROTEIN RECX FAMILY PROTEIN"/>
    <property type="match status" value="1"/>
</dbReference>
<dbReference type="PANTHER" id="PTHR33602:SF1">
    <property type="entry name" value="REGULATORY PROTEIN RECX FAMILY PROTEIN"/>
    <property type="match status" value="1"/>
</dbReference>
<dbReference type="Pfam" id="PF21982">
    <property type="entry name" value="RecX_HTH1"/>
    <property type="match status" value="1"/>
</dbReference>
<dbReference type="Pfam" id="PF02631">
    <property type="entry name" value="RecX_HTH2"/>
    <property type="match status" value="1"/>
</dbReference>
<dbReference type="Pfam" id="PF21981">
    <property type="entry name" value="RecX_HTH3"/>
    <property type="match status" value="1"/>
</dbReference>
<evidence type="ECO:0000255" key="1">
    <source>
        <dbReference type="HAMAP-Rule" id="MF_01114"/>
    </source>
</evidence>
<gene>
    <name evidence="1" type="primary">recX</name>
    <name type="ordered locus">UTI89_C3060</name>
</gene>
<protein>
    <recommendedName>
        <fullName evidence="1">Regulatory protein RecX</fullName>
    </recommendedName>
</protein>
<comment type="function">
    <text evidence="1">Modulates RecA activity.</text>
</comment>
<comment type="subcellular location">
    <subcellularLocation>
        <location evidence="1">Cytoplasm</location>
    </subcellularLocation>
</comment>
<comment type="similarity">
    <text evidence="1">Belongs to the RecX family.</text>
</comment>
<name>RECX_ECOUT</name>
<reference key="1">
    <citation type="journal article" date="2006" name="Proc. Natl. Acad. Sci. U.S.A.">
        <title>Identification of genes subject to positive selection in uropathogenic strains of Escherichia coli: a comparative genomics approach.</title>
        <authorList>
            <person name="Chen S.L."/>
            <person name="Hung C.-S."/>
            <person name="Xu J."/>
            <person name="Reigstad C.S."/>
            <person name="Magrini V."/>
            <person name="Sabo A."/>
            <person name="Blasiar D."/>
            <person name="Bieri T."/>
            <person name="Meyer R.R."/>
            <person name="Ozersky P."/>
            <person name="Armstrong J.R."/>
            <person name="Fulton R.S."/>
            <person name="Latreille J.P."/>
            <person name="Spieth J."/>
            <person name="Hooton T.M."/>
            <person name="Mardis E.R."/>
            <person name="Hultgren S.J."/>
            <person name="Gordon J.I."/>
        </authorList>
    </citation>
    <scope>NUCLEOTIDE SEQUENCE [LARGE SCALE GENOMIC DNA]</scope>
    <source>
        <strain>UTI89 / UPEC</strain>
    </source>
</reference>
<organism>
    <name type="scientific">Escherichia coli (strain UTI89 / UPEC)</name>
    <dbReference type="NCBI Taxonomy" id="364106"/>
    <lineage>
        <taxon>Bacteria</taxon>
        <taxon>Pseudomonadati</taxon>
        <taxon>Pseudomonadota</taxon>
        <taxon>Gammaproteobacteria</taxon>
        <taxon>Enterobacterales</taxon>
        <taxon>Enterobacteriaceae</taxon>
        <taxon>Escherichia</taxon>
    </lineage>
</organism>
<feature type="chain" id="PRO_1000065169" description="Regulatory protein RecX">
    <location>
        <begin position="1"/>
        <end position="166"/>
    </location>
</feature>
<keyword id="KW-0963">Cytoplasm</keyword>